<comment type="function">
    <text evidence="1">Catalyzes the synthesis of the hydroxymethylpyrimidine phosphate (HMP-P) moiety of thiamine from aminoimidazole ribotide (AIR) in a radical S-adenosyl-L-methionine (SAM)-dependent reaction.</text>
</comment>
<comment type="catalytic activity">
    <reaction evidence="1">
        <text>5-amino-1-(5-phospho-beta-D-ribosyl)imidazole + S-adenosyl-L-methionine = 4-amino-2-methyl-5-(phosphooxymethyl)pyrimidine + CO + 5'-deoxyadenosine + formate + L-methionine + 3 H(+)</text>
        <dbReference type="Rhea" id="RHEA:24840"/>
        <dbReference type="ChEBI" id="CHEBI:15378"/>
        <dbReference type="ChEBI" id="CHEBI:15740"/>
        <dbReference type="ChEBI" id="CHEBI:17245"/>
        <dbReference type="ChEBI" id="CHEBI:17319"/>
        <dbReference type="ChEBI" id="CHEBI:57844"/>
        <dbReference type="ChEBI" id="CHEBI:58354"/>
        <dbReference type="ChEBI" id="CHEBI:59789"/>
        <dbReference type="ChEBI" id="CHEBI:137981"/>
        <dbReference type="EC" id="4.1.99.17"/>
    </reaction>
</comment>
<comment type="cofactor">
    <cofactor evidence="1">
        <name>[4Fe-4S] cluster</name>
        <dbReference type="ChEBI" id="CHEBI:49883"/>
    </cofactor>
    <text evidence="1">Binds 1 [4Fe-4S] cluster per subunit. The cluster is coordinated with 3 cysteines and an exchangeable S-adenosyl-L-methionine.</text>
</comment>
<comment type="pathway">
    <text evidence="1">Cofactor biosynthesis; thiamine diphosphate biosynthesis.</text>
</comment>
<comment type="similarity">
    <text evidence="1">Belongs to the ThiC family.</text>
</comment>
<organism>
    <name type="scientific">Methanopyrus kandleri (strain AV19 / DSM 6324 / JCM 9639 / NBRC 100938)</name>
    <dbReference type="NCBI Taxonomy" id="190192"/>
    <lineage>
        <taxon>Archaea</taxon>
        <taxon>Methanobacteriati</taxon>
        <taxon>Methanobacteriota</taxon>
        <taxon>Methanomada group</taxon>
        <taxon>Methanopyri</taxon>
        <taxon>Methanopyrales</taxon>
        <taxon>Methanopyraceae</taxon>
        <taxon>Methanopyrus</taxon>
    </lineage>
</organism>
<gene>
    <name evidence="1" type="primary">thiC</name>
    <name type="ordered locus">MK0106</name>
</gene>
<proteinExistence type="inferred from homology"/>
<feature type="chain" id="PRO_0000152863" description="Phosphomethylpyrimidine synthase">
    <location>
        <begin position="1"/>
        <end position="429"/>
    </location>
</feature>
<feature type="binding site" evidence="1">
    <location>
        <position position="66"/>
    </location>
    <ligand>
        <name>substrate</name>
    </ligand>
</feature>
<feature type="binding site" evidence="1">
    <location>
        <position position="95"/>
    </location>
    <ligand>
        <name>substrate</name>
    </ligand>
</feature>
<feature type="binding site" evidence="1">
    <location>
        <position position="124"/>
    </location>
    <ligand>
        <name>substrate</name>
    </ligand>
</feature>
<feature type="binding site" evidence="1">
    <location>
        <position position="163"/>
    </location>
    <ligand>
        <name>substrate</name>
    </ligand>
</feature>
<feature type="binding site" evidence="1">
    <location>
        <begin position="185"/>
        <end position="187"/>
    </location>
    <ligand>
        <name>substrate</name>
    </ligand>
</feature>
<feature type="binding site" evidence="1">
    <location>
        <begin position="226"/>
        <end position="229"/>
    </location>
    <ligand>
        <name>substrate</name>
    </ligand>
</feature>
<feature type="binding site" evidence="1">
    <location>
        <position position="265"/>
    </location>
    <ligand>
        <name>substrate</name>
    </ligand>
</feature>
<feature type="binding site" evidence="1">
    <location>
        <position position="269"/>
    </location>
    <ligand>
        <name>Zn(2+)</name>
        <dbReference type="ChEBI" id="CHEBI:29105"/>
    </ligand>
</feature>
<feature type="binding site" evidence="1">
    <location>
        <position position="292"/>
    </location>
    <ligand>
        <name>substrate</name>
    </ligand>
</feature>
<feature type="binding site" evidence="1">
    <location>
        <position position="333"/>
    </location>
    <ligand>
        <name>Zn(2+)</name>
        <dbReference type="ChEBI" id="CHEBI:29105"/>
    </ligand>
</feature>
<feature type="binding site" evidence="1">
    <location>
        <position position="409"/>
    </location>
    <ligand>
        <name>[4Fe-4S] cluster</name>
        <dbReference type="ChEBI" id="CHEBI:49883"/>
        <note>4Fe-4S-S-AdoMet</note>
    </ligand>
</feature>
<feature type="binding site" evidence="1">
    <location>
        <position position="412"/>
    </location>
    <ligand>
        <name>[4Fe-4S] cluster</name>
        <dbReference type="ChEBI" id="CHEBI:49883"/>
        <note>4Fe-4S-S-AdoMet</note>
    </ligand>
</feature>
<feature type="binding site" evidence="1">
    <location>
        <position position="416"/>
    </location>
    <ligand>
        <name>[4Fe-4S] cluster</name>
        <dbReference type="ChEBI" id="CHEBI:49883"/>
        <note>4Fe-4S-S-AdoMet</note>
    </ligand>
</feature>
<dbReference type="EC" id="4.1.99.17" evidence="1"/>
<dbReference type="EMBL" id="AE009439">
    <property type="protein sequence ID" value="AAM01323.1"/>
    <property type="molecule type" value="Genomic_DNA"/>
</dbReference>
<dbReference type="RefSeq" id="WP_011018478.1">
    <property type="nucleotide sequence ID" value="NC_003551.1"/>
</dbReference>
<dbReference type="SMR" id="Q8TZ33"/>
<dbReference type="FunCoup" id="Q8TZ33">
    <property type="interactions" value="114"/>
</dbReference>
<dbReference type="STRING" id="190192.MK0106"/>
<dbReference type="PaxDb" id="190192-MK0106"/>
<dbReference type="EnsemblBacteria" id="AAM01323">
    <property type="protein sequence ID" value="AAM01323"/>
    <property type="gene ID" value="MK0106"/>
</dbReference>
<dbReference type="GeneID" id="1477409"/>
<dbReference type="KEGG" id="mka:MK0106"/>
<dbReference type="PATRIC" id="fig|190192.8.peg.105"/>
<dbReference type="HOGENOM" id="CLU_013181_2_2_2"/>
<dbReference type="InParanoid" id="Q8TZ33"/>
<dbReference type="OrthoDB" id="335406at2157"/>
<dbReference type="UniPathway" id="UPA00060"/>
<dbReference type="Proteomes" id="UP000001826">
    <property type="component" value="Chromosome"/>
</dbReference>
<dbReference type="GO" id="GO:0051539">
    <property type="term" value="F:4 iron, 4 sulfur cluster binding"/>
    <property type="evidence" value="ECO:0007669"/>
    <property type="project" value="UniProtKB-KW"/>
</dbReference>
<dbReference type="GO" id="GO:0016830">
    <property type="term" value="F:carbon-carbon lyase activity"/>
    <property type="evidence" value="ECO:0007669"/>
    <property type="project" value="InterPro"/>
</dbReference>
<dbReference type="GO" id="GO:0008270">
    <property type="term" value="F:zinc ion binding"/>
    <property type="evidence" value="ECO:0007669"/>
    <property type="project" value="UniProtKB-UniRule"/>
</dbReference>
<dbReference type="GO" id="GO:0009228">
    <property type="term" value="P:thiamine biosynthetic process"/>
    <property type="evidence" value="ECO:0007669"/>
    <property type="project" value="UniProtKB-KW"/>
</dbReference>
<dbReference type="GO" id="GO:0009229">
    <property type="term" value="P:thiamine diphosphate biosynthetic process"/>
    <property type="evidence" value="ECO:0007669"/>
    <property type="project" value="UniProtKB-UniRule"/>
</dbReference>
<dbReference type="FunFam" id="3.20.20.540:FF:000001">
    <property type="entry name" value="Phosphomethylpyrimidine synthase"/>
    <property type="match status" value="1"/>
</dbReference>
<dbReference type="Gene3D" id="6.10.250.620">
    <property type="match status" value="1"/>
</dbReference>
<dbReference type="Gene3D" id="3.20.20.540">
    <property type="entry name" value="Radical SAM ThiC family, central domain"/>
    <property type="match status" value="1"/>
</dbReference>
<dbReference type="HAMAP" id="MF_00089">
    <property type="entry name" value="ThiC"/>
    <property type="match status" value="1"/>
</dbReference>
<dbReference type="InterPro" id="IPR037509">
    <property type="entry name" value="ThiC"/>
</dbReference>
<dbReference type="InterPro" id="IPR038521">
    <property type="entry name" value="ThiC/Bza_core_dom"/>
</dbReference>
<dbReference type="InterPro" id="IPR002817">
    <property type="entry name" value="ThiC/BzaA/B"/>
</dbReference>
<dbReference type="NCBIfam" id="NF009895">
    <property type="entry name" value="PRK13352.1"/>
    <property type="match status" value="1"/>
</dbReference>
<dbReference type="NCBIfam" id="TIGR00190">
    <property type="entry name" value="thiC"/>
    <property type="match status" value="1"/>
</dbReference>
<dbReference type="PANTHER" id="PTHR30557:SF1">
    <property type="entry name" value="PHOSPHOMETHYLPYRIMIDINE SYNTHASE, CHLOROPLASTIC"/>
    <property type="match status" value="1"/>
</dbReference>
<dbReference type="PANTHER" id="PTHR30557">
    <property type="entry name" value="THIAMINE BIOSYNTHESIS PROTEIN THIC"/>
    <property type="match status" value="1"/>
</dbReference>
<dbReference type="Pfam" id="PF01964">
    <property type="entry name" value="ThiC_Rad_SAM"/>
    <property type="match status" value="1"/>
</dbReference>
<dbReference type="SFLD" id="SFLDF00407">
    <property type="entry name" value="phosphomethylpyrimidine_syntha"/>
    <property type="match status" value="1"/>
</dbReference>
<dbReference type="SFLD" id="SFLDG01114">
    <property type="entry name" value="phosphomethylpyrimidine_syntha"/>
    <property type="match status" value="1"/>
</dbReference>
<dbReference type="SFLD" id="SFLDS00113">
    <property type="entry name" value="Radical_SAM_Phosphomethylpyrim"/>
    <property type="match status" value="1"/>
</dbReference>
<protein>
    <recommendedName>
        <fullName evidence="1">Phosphomethylpyrimidine synthase</fullName>
        <ecNumber evidence="1">4.1.99.17</ecNumber>
    </recommendedName>
    <alternativeName>
        <fullName evidence="1">Hydroxymethylpyrimidine phosphate synthase</fullName>
        <shortName evidence="1">HMP-P synthase</shortName>
        <shortName evidence="1">HMP-phosphate synthase</shortName>
        <shortName evidence="1">HMPP synthase</shortName>
    </alternativeName>
    <alternativeName>
        <fullName evidence="1">Thiamine biosynthesis protein ThiC</fullName>
    </alternativeName>
</protein>
<accession>Q8TZ33</accession>
<reference key="1">
    <citation type="journal article" date="2002" name="Proc. Natl. Acad. Sci. U.S.A.">
        <title>The complete genome of hyperthermophile Methanopyrus kandleri AV19 and monophyly of archaeal methanogens.</title>
        <authorList>
            <person name="Slesarev A.I."/>
            <person name="Mezhevaya K.V."/>
            <person name="Makarova K.S."/>
            <person name="Polushin N.N."/>
            <person name="Shcherbinina O.V."/>
            <person name="Shakhova V.V."/>
            <person name="Belova G.I."/>
            <person name="Aravind L."/>
            <person name="Natale D.A."/>
            <person name="Rogozin I.B."/>
            <person name="Tatusov R.L."/>
            <person name="Wolf Y.I."/>
            <person name="Stetter K.O."/>
            <person name="Malykh A.G."/>
            <person name="Koonin E.V."/>
            <person name="Kozyavkin S.A."/>
        </authorList>
    </citation>
    <scope>NUCLEOTIDE SEQUENCE [LARGE SCALE GENOMIC DNA]</scope>
    <source>
        <strain>AV19 / DSM 6324 / JCM 9639 / NBRC 100938</strain>
    </source>
</reference>
<keyword id="KW-0004">4Fe-4S</keyword>
<keyword id="KW-0408">Iron</keyword>
<keyword id="KW-0411">Iron-sulfur</keyword>
<keyword id="KW-0456">Lyase</keyword>
<keyword id="KW-0479">Metal-binding</keyword>
<keyword id="KW-1185">Reference proteome</keyword>
<keyword id="KW-0949">S-adenosyl-L-methionine</keyword>
<keyword id="KW-0784">Thiamine biosynthesis</keyword>
<keyword id="KW-0862">Zinc</keyword>
<name>THIC_METKA</name>
<evidence type="ECO:0000255" key="1">
    <source>
        <dbReference type="HAMAP-Rule" id="MF_00089"/>
    </source>
</evidence>
<sequence>MTLMEECRRTVPDTVRKIAEEEGVRPEKLARRVAEGRVVVPAHADRRDEVRPVGIGEGLRVKINANVGTSPEVCDPDLEVEKARAAVDHGADTVMDLSTGGDLREIRRRIMKAVDVPVGTVPVYEAAVEMTRRGRAVVDMDEDDMLRAIERHMEDGVDFMTVHCAVTLDALEDVLRRGRALGIVSRGGAIVAAWMIHHDAENPLYENFDYILELAREHDVTLSLGDAMRPGSVLDANDAAQHRELVVQGELVDRCREAGVQAMVEGPGHVPLDQIPAVVRLQKRVCDGAPFYVLGPVPTDVAPGYDHIAAAIGGAIAAYHGADFLCYVTPAEHLALPDVKDVILGVIATRIAAHAADTARGMKYARRENEEMAEARWNLDWDRQFELAIDPKKPRHYREERPPQAKELCSMCGEYCAIKILKDALEERR</sequence>